<organism>
    <name type="scientific">Lactococcus lactis subsp. cremoris (strain SK11)</name>
    <dbReference type="NCBI Taxonomy" id="272622"/>
    <lineage>
        <taxon>Bacteria</taxon>
        <taxon>Bacillati</taxon>
        <taxon>Bacillota</taxon>
        <taxon>Bacilli</taxon>
        <taxon>Lactobacillales</taxon>
        <taxon>Streptococcaceae</taxon>
        <taxon>Lactococcus</taxon>
        <taxon>Lactococcus cremoris subsp. cremoris</taxon>
    </lineage>
</organism>
<protein>
    <recommendedName>
        <fullName evidence="1">Large ribosomal subunit protein bL35</fullName>
    </recommendedName>
    <alternativeName>
        <fullName evidence="3">50S ribosomal protein L35</fullName>
    </alternativeName>
</protein>
<sequence length="66" mass="7818">MPKQKTHRASAKRFKRTGNGGLKRFRAYTSHRFHGKSVKQRRQLRKASMVSKGDFKRIRRMVATMK</sequence>
<reference key="1">
    <citation type="journal article" date="2006" name="Proc. Natl. Acad. Sci. U.S.A.">
        <title>Comparative genomics of the lactic acid bacteria.</title>
        <authorList>
            <person name="Makarova K.S."/>
            <person name="Slesarev A."/>
            <person name="Wolf Y.I."/>
            <person name="Sorokin A."/>
            <person name="Mirkin B."/>
            <person name="Koonin E.V."/>
            <person name="Pavlov A."/>
            <person name="Pavlova N."/>
            <person name="Karamychev V."/>
            <person name="Polouchine N."/>
            <person name="Shakhova V."/>
            <person name="Grigoriev I."/>
            <person name="Lou Y."/>
            <person name="Rohksar D."/>
            <person name="Lucas S."/>
            <person name="Huang K."/>
            <person name="Goodstein D.M."/>
            <person name="Hawkins T."/>
            <person name="Plengvidhya V."/>
            <person name="Welker D."/>
            <person name="Hughes J."/>
            <person name="Goh Y."/>
            <person name="Benson A."/>
            <person name="Baldwin K."/>
            <person name="Lee J.-H."/>
            <person name="Diaz-Muniz I."/>
            <person name="Dosti B."/>
            <person name="Smeianov V."/>
            <person name="Wechter W."/>
            <person name="Barabote R."/>
            <person name="Lorca G."/>
            <person name="Altermann E."/>
            <person name="Barrangou R."/>
            <person name="Ganesan B."/>
            <person name="Xie Y."/>
            <person name="Rawsthorne H."/>
            <person name="Tamir D."/>
            <person name="Parker C."/>
            <person name="Breidt F."/>
            <person name="Broadbent J.R."/>
            <person name="Hutkins R."/>
            <person name="O'Sullivan D."/>
            <person name="Steele J."/>
            <person name="Unlu G."/>
            <person name="Saier M.H. Jr."/>
            <person name="Klaenhammer T."/>
            <person name="Richardson P."/>
            <person name="Kozyavkin S."/>
            <person name="Weimer B.C."/>
            <person name="Mills D.A."/>
        </authorList>
    </citation>
    <scope>NUCLEOTIDE SEQUENCE [LARGE SCALE GENOMIC DNA]</scope>
    <source>
        <strain>SK11</strain>
    </source>
</reference>
<proteinExistence type="inferred from homology"/>
<name>RL35_LACLS</name>
<gene>
    <name evidence="1" type="primary">rpmI</name>
    <name type="ordered locus">LACR_2032</name>
</gene>
<keyword id="KW-0687">Ribonucleoprotein</keyword>
<keyword id="KW-0689">Ribosomal protein</keyword>
<evidence type="ECO:0000255" key="1">
    <source>
        <dbReference type="HAMAP-Rule" id="MF_00514"/>
    </source>
</evidence>
<evidence type="ECO:0000256" key="2">
    <source>
        <dbReference type="SAM" id="MobiDB-lite"/>
    </source>
</evidence>
<evidence type="ECO:0000305" key="3"/>
<dbReference type="EMBL" id="CP000425">
    <property type="protein sequence ID" value="ABJ73513.1"/>
    <property type="molecule type" value="Genomic_DNA"/>
</dbReference>
<dbReference type="RefSeq" id="WP_011676854.1">
    <property type="nucleotide sequence ID" value="NC_008527.1"/>
</dbReference>
<dbReference type="SMR" id="Q02X09"/>
<dbReference type="GeneID" id="61110173"/>
<dbReference type="KEGG" id="llc:LACR_2032"/>
<dbReference type="HOGENOM" id="CLU_169643_3_0_9"/>
<dbReference type="Proteomes" id="UP000000240">
    <property type="component" value="Chromosome"/>
</dbReference>
<dbReference type="GO" id="GO:0022625">
    <property type="term" value="C:cytosolic large ribosomal subunit"/>
    <property type="evidence" value="ECO:0007669"/>
    <property type="project" value="TreeGrafter"/>
</dbReference>
<dbReference type="GO" id="GO:0003735">
    <property type="term" value="F:structural constituent of ribosome"/>
    <property type="evidence" value="ECO:0007669"/>
    <property type="project" value="InterPro"/>
</dbReference>
<dbReference type="GO" id="GO:0006412">
    <property type="term" value="P:translation"/>
    <property type="evidence" value="ECO:0007669"/>
    <property type="project" value="UniProtKB-UniRule"/>
</dbReference>
<dbReference type="FunFam" id="4.10.410.60:FF:000001">
    <property type="entry name" value="50S ribosomal protein L35"/>
    <property type="match status" value="1"/>
</dbReference>
<dbReference type="Gene3D" id="4.10.410.60">
    <property type="match status" value="1"/>
</dbReference>
<dbReference type="HAMAP" id="MF_00514">
    <property type="entry name" value="Ribosomal_bL35"/>
    <property type="match status" value="1"/>
</dbReference>
<dbReference type="InterPro" id="IPR001706">
    <property type="entry name" value="Ribosomal_bL35"/>
</dbReference>
<dbReference type="InterPro" id="IPR021137">
    <property type="entry name" value="Ribosomal_bL35-like"/>
</dbReference>
<dbReference type="InterPro" id="IPR018265">
    <property type="entry name" value="Ribosomal_bL35_CS"/>
</dbReference>
<dbReference type="InterPro" id="IPR037229">
    <property type="entry name" value="Ribosomal_bL35_sf"/>
</dbReference>
<dbReference type="NCBIfam" id="TIGR00001">
    <property type="entry name" value="rpmI_bact"/>
    <property type="match status" value="1"/>
</dbReference>
<dbReference type="PANTHER" id="PTHR33343">
    <property type="entry name" value="54S RIBOSOMAL PROTEIN BL35M"/>
    <property type="match status" value="1"/>
</dbReference>
<dbReference type="PANTHER" id="PTHR33343:SF1">
    <property type="entry name" value="LARGE RIBOSOMAL SUBUNIT PROTEIN BL35M"/>
    <property type="match status" value="1"/>
</dbReference>
<dbReference type="Pfam" id="PF01632">
    <property type="entry name" value="Ribosomal_L35p"/>
    <property type="match status" value="1"/>
</dbReference>
<dbReference type="PRINTS" id="PR00064">
    <property type="entry name" value="RIBOSOMALL35"/>
</dbReference>
<dbReference type="SUPFAM" id="SSF143034">
    <property type="entry name" value="L35p-like"/>
    <property type="match status" value="1"/>
</dbReference>
<dbReference type="PROSITE" id="PS00936">
    <property type="entry name" value="RIBOSOMAL_L35"/>
    <property type="match status" value="1"/>
</dbReference>
<comment type="similarity">
    <text evidence="1">Belongs to the bacterial ribosomal protein bL35 family.</text>
</comment>
<feature type="chain" id="PRO_1000050707" description="Large ribosomal subunit protein bL35">
    <location>
        <begin position="1"/>
        <end position="66"/>
    </location>
</feature>
<feature type="region of interest" description="Disordered" evidence="2">
    <location>
        <begin position="1"/>
        <end position="21"/>
    </location>
</feature>
<feature type="compositionally biased region" description="Basic residues" evidence="2">
    <location>
        <begin position="1"/>
        <end position="16"/>
    </location>
</feature>
<accession>Q02X09</accession>